<evidence type="ECO:0000255" key="1">
    <source>
        <dbReference type="HAMAP-Rule" id="MF_01197"/>
    </source>
</evidence>
<evidence type="ECO:0000256" key="2">
    <source>
        <dbReference type="SAM" id="MobiDB-lite"/>
    </source>
</evidence>
<accession>B8ZM59</accession>
<proteinExistence type="inferred from homology"/>
<comment type="function">
    <text evidence="1">Cell division protein that is part of the divisome complex and is recruited early to the Z-ring. Probably stimulates Z-ring formation, perhaps through the cross-linking of FtsZ protofilaments. Its function overlaps with FtsA.</text>
</comment>
<comment type="subunit">
    <text evidence="1">Homodimer. Interacts with FtsZ.</text>
</comment>
<comment type="subcellular location">
    <subcellularLocation>
        <location evidence="1">Cytoplasm</location>
    </subcellularLocation>
    <text evidence="1">Localizes to the division site, in a FtsZ-dependent manner.</text>
</comment>
<comment type="similarity">
    <text evidence="1">Belongs to the SepF family.</text>
</comment>
<dbReference type="EMBL" id="FM211187">
    <property type="protein sequence ID" value="CAR69437.1"/>
    <property type="molecule type" value="Genomic_DNA"/>
</dbReference>
<dbReference type="RefSeq" id="WP_000053385.1">
    <property type="nucleotide sequence ID" value="NC_011900.1"/>
</dbReference>
<dbReference type="SMR" id="B8ZM59"/>
<dbReference type="KEGG" id="sne:SPN23F16650"/>
<dbReference type="HOGENOM" id="CLU_078499_2_0_9"/>
<dbReference type="GO" id="GO:0005737">
    <property type="term" value="C:cytoplasm"/>
    <property type="evidence" value="ECO:0007669"/>
    <property type="project" value="UniProtKB-SubCell"/>
</dbReference>
<dbReference type="GO" id="GO:0000917">
    <property type="term" value="P:division septum assembly"/>
    <property type="evidence" value="ECO:0007669"/>
    <property type="project" value="UniProtKB-KW"/>
</dbReference>
<dbReference type="GO" id="GO:0043093">
    <property type="term" value="P:FtsZ-dependent cytokinesis"/>
    <property type="evidence" value="ECO:0007669"/>
    <property type="project" value="UniProtKB-UniRule"/>
</dbReference>
<dbReference type="Gene3D" id="3.30.110.150">
    <property type="entry name" value="SepF-like protein"/>
    <property type="match status" value="1"/>
</dbReference>
<dbReference type="HAMAP" id="MF_01197">
    <property type="entry name" value="SepF"/>
    <property type="match status" value="1"/>
</dbReference>
<dbReference type="InterPro" id="IPR023052">
    <property type="entry name" value="Cell_div_SepF"/>
</dbReference>
<dbReference type="InterPro" id="IPR007561">
    <property type="entry name" value="Cell_div_SepF/SepF-rel"/>
</dbReference>
<dbReference type="InterPro" id="IPR038594">
    <property type="entry name" value="SepF-like_sf"/>
</dbReference>
<dbReference type="PANTHER" id="PTHR35798">
    <property type="entry name" value="CELL DIVISION PROTEIN SEPF"/>
    <property type="match status" value="1"/>
</dbReference>
<dbReference type="PANTHER" id="PTHR35798:SF1">
    <property type="entry name" value="CELL DIVISION PROTEIN SEPF"/>
    <property type="match status" value="1"/>
</dbReference>
<dbReference type="Pfam" id="PF04472">
    <property type="entry name" value="SepF"/>
    <property type="match status" value="1"/>
</dbReference>
<gene>
    <name evidence="1" type="primary">sepF</name>
    <name type="ordered locus">SPN23F16650</name>
</gene>
<keyword id="KW-0131">Cell cycle</keyword>
<keyword id="KW-0132">Cell division</keyword>
<keyword id="KW-0963">Cytoplasm</keyword>
<keyword id="KW-0717">Septation</keyword>
<feature type="chain" id="PRO_1000164544" description="Cell division protein SepF">
    <location>
        <begin position="1"/>
        <end position="179"/>
    </location>
</feature>
<feature type="region of interest" description="Disordered" evidence="2">
    <location>
        <begin position="18"/>
        <end position="55"/>
    </location>
</feature>
<feature type="compositionally biased region" description="Polar residues" evidence="2">
    <location>
        <begin position="34"/>
        <end position="55"/>
    </location>
</feature>
<protein>
    <recommendedName>
        <fullName evidence="1">Cell division protein SepF</fullName>
    </recommendedName>
</protein>
<reference key="1">
    <citation type="journal article" date="2009" name="J. Bacteriol.">
        <title>Role of conjugative elements in the evolution of the multidrug-resistant pandemic clone Streptococcus pneumoniae Spain23F ST81.</title>
        <authorList>
            <person name="Croucher N.J."/>
            <person name="Walker D."/>
            <person name="Romero P."/>
            <person name="Lennard N."/>
            <person name="Paterson G.K."/>
            <person name="Bason N.C."/>
            <person name="Mitchell A.M."/>
            <person name="Quail M.A."/>
            <person name="Andrew P.W."/>
            <person name="Parkhill J."/>
            <person name="Bentley S.D."/>
            <person name="Mitchell T.J."/>
        </authorList>
    </citation>
    <scope>NUCLEOTIDE SEQUENCE [LARGE SCALE GENOMIC DNA]</scope>
    <source>
        <strain>ATCC 700669 / Spain 23F-1</strain>
    </source>
</reference>
<organism>
    <name type="scientific">Streptococcus pneumoniae (strain ATCC 700669 / Spain 23F-1)</name>
    <dbReference type="NCBI Taxonomy" id="561276"/>
    <lineage>
        <taxon>Bacteria</taxon>
        <taxon>Bacillati</taxon>
        <taxon>Bacillota</taxon>
        <taxon>Bacilli</taxon>
        <taxon>Lactobacillales</taxon>
        <taxon>Streptococcaceae</taxon>
        <taxon>Streptococcus</taxon>
    </lineage>
</organism>
<name>SEPF_STRPJ</name>
<sequence>MSLKDRFDRFIDYFTEDEDSSLPYEKRDEPVFTPVNSSQEPALPMNQPSQSAGTKENNITRLHARQQELANQSQRATDKVIIDVRYPRKYEDATEIVDLLAGNESILIDFQYMTEVQARRCLDYLDGACHVLAGNLKKVASTMYLLTPVNVIVNVEDIRLPDEDQQGEFGFDMKRNRVR</sequence>